<organism>
    <name type="scientific">Pseudomonas aeruginosa (strain UCBPP-PA14)</name>
    <dbReference type="NCBI Taxonomy" id="208963"/>
    <lineage>
        <taxon>Bacteria</taxon>
        <taxon>Pseudomonadati</taxon>
        <taxon>Pseudomonadota</taxon>
        <taxon>Gammaproteobacteria</taxon>
        <taxon>Pseudomonadales</taxon>
        <taxon>Pseudomonadaceae</taxon>
        <taxon>Pseudomonas</taxon>
    </lineage>
</organism>
<accession>Q02RT0</accession>
<evidence type="ECO:0000255" key="1">
    <source>
        <dbReference type="HAMAP-Rule" id="MF_00378"/>
    </source>
</evidence>
<name>EX7L_PSEAB</name>
<keyword id="KW-0963">Cytoplasm</keyword>
<keyword id="KW-0269">Exonuclease</keyword>
<keyword id="KW-0378">Hydrolase</keyword>
<keyword id="KW-0540">Nuclease</keyword>
<comment type="function">
    <text evidence="1">Bidirectionally degrades single-stranded DNA into large acid-insoluble oligonucleotides, which are then degraded further into small acid-soluble oligonucleotides.</text>
</comment>
<comment type="catalytic activity">
    <reaction evidence="1">
        <text>Exonucleolytic cleavage in either 5'- to 3'- or 3'- to 5'-direction to yield nucleoside 5'-phosphates.</text>
        <dbReference type="EC" id="3.1.11.6"/>
    </reaction>
</comment>
<comment type="subunit">
    <text evidence="1">Heterooligomer composed of large and small subunits.</text>
</comment>
<comment type="subcellular location">
    <subcellularLocation>
        <location evidence="1">Cytoplasm</location>
    </subcellularLocation>
</comment>
<comment type="similarity">
    <text evidence="1">Belongs to the XseA family.</text>
</comment>
<reference key="1">
    <citation type="journal article" date="2006" name="Genome Biol.">
        <title>Genomic analysis reveals that Pseudomonas aeruginosa virulence is combinatorial.</title>
        <authorList>
            <person name="Lee D.G."/>
            <person name="Urbach J.M."/>
            <person name="Wu G."/>
            <person name="Liberati N.T."/>
            <person name="Feinbaum R.L."/>
            <person name="Miyata S."/>
            <person name="Diggins L.T."/>
            <person name="He J."/>
            <person name="Saucier M."/>
            <person name="Deziel E."/>
            <person name="Friedman L."/>
            <person name="Li L."/>
            <person name="Grills G."/>
            <person name="Montgomery K."/>
            <person name="Kucherlapati R."/>
            <person name="Rahme L.G."/>
            <person name="Ausubel F.M."/>
        </authorList>
    </citation>
    <scope>NUCLEOTIDE SEQUENCE [LARGE SCALE GENOMIC DNA]</scope>
    <source>
        <strain>UCBPP-PA14</strain>
    </source>
</reference>
<protein>
    <recommendedName>
        <fullName evidence="1">Exodeoxyribonuclease 7 large subunit</fullName>
        <ecNumber evidence="1">3.1.11.6</ecNumber>
    </recommendedName>
    <alternativeName>
        <fullName evidence="1">Exodeoxyribonuclease VII large subunit</fullName>
        <shortName evidence="1">Exonuclease VII large subunit</shortName>
    </alternativeName>
</protein>
<gene>
    <name evidence="1" type="primary">xseA</name>
    <name type="ordered locus">PA14_15230</name>
</gene>
<proteinExistence type="inferred from homology"/>
<feature type="chain" id="PRO_0000303809" description="Exodeoxyribonuclease 7 large subunit">
    <location>
        <begin position="1"/>
        <end position="459"/>
    </location>
</feature>
<sequence length="459" mass="51222">MRNDPFQRLGLDREVLTVSQLNQRARLLLEDVFPQVWVEGELSNLARPASGHVYFTLKDSNAQIRCALFRQNALRVRQALRDGLAVKVRGKISLFEGRGDYQLIADTVEPAGDGALRLAFEALKEKLAGEGLFASERKRPLPAHPRRIGIVSSPSGAVIRDIISVFRRRAPQVELTLVPTAVQGREAVAQIVRALQLADRQGFDALILARGGGSLEDLWCFNEEAVARAVAACATPIVSAVGHETDVSISDFVADVRAPTPSAAAELLAPNAGDLQQRLDGLRRRLVLRMRDQLLRERLRLEGVARRLRHPGERLRQQAQRLDDLDMRLRRAFERHLAVRHERLVRLETRLAAQHPGRTLALLRQKLDSLAARLPRAAREVLKDRRQHLEGLAQTLNVVSPLATLGRGYSILLDERGRAIRDAGQTQPGQRLKARLAEGELEVRVEDNHRTPVTLSLLD</sequence>
<dbReference type="EC" id="3.1.11.6" evidence="1"/>
<dbReference type="EMBL" id="CP000438">
    <property type="protein sequence ID" value="ABJ13038.1"/>
    <property type="molecule type" value="Genomic_DNA"/>
</dbReference>
<dbReference type="RefSeq" id="WP_003137871.1">
    <property type="nucleotide sequence ID" value="NZ_CP034244.1"/>
</dbReference>
<dbReference type="SMR" id="Q02RT0"/>
<dbReference type="KEGG" id="pau:PA14_15230"/>
<dbReference type="PseudoCAP" id="PA14_15230"/>
<dbReference type="HOGENOM" id="CLU_023625_3_1_6"/>
<dbReference type="BioCyc" id="PAER208963:G1G74-1246-MONOMER"/>
<dbReference type="Proteomes" id="UP000000653">
    <property type="component" value="Chromosome"/>
</dbReference>
<dbReference type="GO" id="GO:0005737">
    <property type="term" value="C:cytoplasm"/>
    <property type="evidence" value="ECO:0007669"/>
    <property type="project" value="UniProtKB-SubCell"/>
</dbReference>
<dbReference type="GO" id="GO:0009318">
    <property type="term" value="C:exodeoxyribonuclease VII complex"/>
    <property type="evidence" value="ECO:0007669"/>
    <property type="project" value="InterPro"/>
</dbReference>
<dbReference type="GO" id="GO:0008855">
    <property type="term" value="F:exodeoxyribonuclease VII activity"/>
    <property type="evidence" value="ECO:0007669"/>
    <property type="project" value="UniProtKB-UniRule"/>
</dbReference>
<dbReference type="GO" id="GO:0003676">
    <property type="term" value="F:nucleic acid binding"/>
    <property type="evidence" value="ECO:0007669"/>
    <property type="project" value="InterPro"/>
</dbReference>
<dbReference type="GO" id="GO:0006308">
    <property type="term" value="P:DNA catabolic process"/>
    <property type="evidence" value="ECO:0007669"/>
    <property type="project" value="UniProtKB-UniRule"/>
</dbReference>
<dbReference type="CDD" id="cd04489">
    <property type="entry name" value="ExoVII_LU_OBF"/>
    <property type="match status" value="1"/>
</dbReference>
<dbReference type="HAMAP" id="MF_00378">
    <property type="entry name" value="Exonuc_7_L"/>
    <property type="match status" value="1"/>
</dbReference>
<dbReference type="InterPro" id="IPR003753">
    <property type="entry name" value="Exonuc_VII_L"/>
</dbReference>
<dbReference type="InterPro" id="IPR020579">
    <property type="entry name" value="Exonuc_VII_lsu_C"/>
</dbReference>
<dbReference type="InterPro" id="IPR025824">
    <property type="entry name" value="OB-fold_nuc-bd_dom"/>
</dbReference>
<dbReference type="NCBIfam" id="TIGR00237">
    <property type="entry name" value="xseA"/>
    <property type="match status" value="1"/>
</dbReference>
<dbReference type="PANTHER" id="PTHR30008">
    <property type="entry name" value="EXODEOXYRIBONUCLEASE 7 LARGE SUBUNIT"/>
    <property type="match status" value="1"/>
</dbReference>
<dbReference type="PANTHER" id="PTHR30008:SF0">
    <property type="entry name" value="EXODEOXYRIBONUCLEASE 7 LARGE SUBUNIT"/>
    <property type="match status" value="1"/>
</dbReference>
<dbReference type="Pfam" id="PF02601">
    <property type="entry name" value="Exonuc_VII_L"/>
    <property type="match status" value="1"/>
</dbReference>
<dbReference type="Pfam" id="PF13742">
    <property type="entry name" value="tRNA_anti_2"/>
    <property type="match status" value="1"/>
</dbReference>